<gene>
    <name evidence="1" type="primary">acpS</name>
    <name type="ordered locus">Amet_4147</name>
</gene>
<reference key="1">
    <citation type="journal article" date="2016" name="Genome Announc.">
        <title>Complete genome sequence of Alkaliphilus metalliredigens strain QYMF, an alkaliphilic and metal-reducing bacterium isolated from borax-contaminated leachate ponds.</title>
        <authorList>
            <person name="Hwang C."/>
            <person name="Copeland A."/>
            <person name="Lucas S."/>
            <person name="Lapidus A."/>
            <person name="Barry K."/>
            <person name="Detter J.C."/>
            <person name="Glavina Del Rio T."/>
            <person name="Hammon N."/>
            <person name="Israni S."/>
            <person name="Dalin E."/>
            <person name="Tice H."/>
            <person name="Pitluck S."/>
            <person name="Chertkov O."/>
            <person name="Brettin T."/>
            <person name="Bruce D."/>
            <person name="Han C."/>
            <person name="Schmutz J."/>
            <person name="Larimer F."/>
            <person name="Land M.L."/>
            <person name="Hauser L."/>
            <person name="Kyrpides N."/>
            <person name="Mikhailova N."/>
            <person name="Ye Q."/>
            <person name="Zhou J."/>
            <person name="Richardson P."/>
            <person name="Fields M.W."/>
        </authorList>
    </citation>
    <scope>NUCLEOTIDE SEQUENCE [LARGE SCALE GENOMIC DNA]</scope>
    <source>
        <strain>QYMF</strain>
    </source>
</reference>
<sequence length="122" mass="13432">MIKGIGIDIIEIERIARALEKNPRFKERLFTLEENRGFIEKGGHPASIAGVFAAKEAVVKALGTGISNMKWKDIEVLKDSAGKPYIKLHNNALEIAYSKNINEIFISISHSKENAVAQAIAT</sequence>
<keyword id="KW-0963">Cytoplasm</keyword>
<keyword id="KW-0275">Fatty acid biosynthesis</keyword>
<keyword id="KW-0276">Fatty acid metabolism</keyword>
<keyword id="KW-0444">Lipid biosynthesis</keyword>
<keyword id="KW-0443">Lipid metabolism</keyword>
<keyword id="KW-0460">Magnesium</keyword>
<keyword id="KW-0479">Metal-binding</keyword>
<keyword id="KW-1185">Reference proteome</keyword>
<keyword id="KW-0808">Transferase</keyword>
<evidence type="ECO:0000255" key="1">
    <source>
        <dbReference type="HAMAP-Rule" id="MF_00101"/>
    </source>
</evidence>
<dbReference type="EC" id="2.7.8.7" evidence="1"/>
<dbReference type="EMBL" id="CP000724">
    <property type="protein sequence ID" value="ABR50228.1"/>
    <property type="molecule type" value="Genomic_DNA"/>
</dbReference>
<dbReference type="RefSeq" id="WP_012065176.1">
    <property type="nucleotide sequence ID" value="NC_009633.1"/>
</dbReference>
<dbReference type="SMR" id="A6TVL0"/>
<dbReference type="STRING" id="293826.Amet_4147"/>
<dbReference type="KEGG" id="amt:Amet_4147"/>
<dbReference type="eggNOG" id="COG0736">
    <property type="taxonomic scope" value="Bacteria"/>
</dbReference>
<dbReference type="HOGENOM" id="CLU_089696_0_2_9"/>
<dbReference type="OrthoDB" id="517356at2"/>
<dbReference type="Proteomes" id="UP000001572">
    <property type="component" value="Chromosome"/>
</dbReference>
<dbReference type="GO" id="GO:0005737">
    <property type="term" value="C:cytoplasm"/>
    <property type="evidence" value="ECO:0007669"/>
    <property type="project" value="UniProtKB-SubCell"/>
</dbReference>
<dbReference type="GO" id="GO:0008897">
    <property type="term" value="F:holo-[acyl-carrier-protein] synthase activity"/>
    <property type="evidence" value="ECO:0007669"/>
    <property type="project" value="UniProtKB-UniRule"/>
</dbReference>
<dbReference type="GO" id="GO:0000287">
    <property type="term" value="F:magnesium ion binding"/>
    <property type="evidence" value="ECO:0007669"/>
    <property type="project" value="UniProtKB-UniRule"/>
</dbReference>
<dbReference type="GO" id="GO:0006633">
    <property type="term" value="P:fatty acid biosynthetic process"/>
    <property type="evidence" value="ECO:0007669"/>
    <property type="project" value="UniProtKB-UniRule"/>
</dbReference>
<dbReference type="Gene3D" id="3.90.470.20">
    <property type="entry name" value="4'-phosphopantetheinyl transferase domain"/>
    <property type="match status" value="1"/>
</dbReference>
<dbReference type="HAMAP" id="MF_00101">
    <property type="entry name" value="AcpS"/>
    <property type="match status" value="1"/>
</dbReference>
<dbReference type="InterPro" id="IPR008278">
    <property type="entry name" value="4-PPantetheinyl_Trfase_dom"/>
</dbReference>
<dbReference type="InterPro" id="IPR037143">
    <property type="entry name" value="4-PPantetheinyl_Trfase_dom_sf"/>
</dbReference>
<dbReference type="InterPro" id="IPR002582">
    <property type="entry name" value="ACPS"/>
</dbReference>
<dbReference type="InterPro" id="IPR004568">
    <property type="entry name" value="Ppantetheine-prot_Trfase_dom"/>
</dbReference>
<dbReference type="NCBIfam" id="TIGR00516">
    <property type="entry name" value="acpS"/>
    <property type="match status" value="1"/>
</dbReference>
<dbReference type="NCBIfam" id="TIGR00556">
    <property type="entry name" value="pantethn_trn"/>
    <property type="match status" value="1"/>
</dbReference>
<dbReference type="Pfam" id="PF01648">
    <property type="entry name" value="ACPS"/>
    <property type="match status" value="1"/>
</dbReference>
<dbReference type="SUPFAM" id="SSF56214">
    <property type="entry name" value="4'-phosphopantetheinyl transferase"/>
    <property type="match status" value="1"/>
</dbReference>
<name>ACPS_ALKMQ</name>
<protein>
    <recommendedName>
        <fullName evidence="1">Holo-[acyl-carrier-protein] synthase</fullName>
        <shortName evidence="1">Holo-ACP synthase</shortName>
        <ecNumber evidence="1">2.7.8.7</ecNumber>
    </recommendedName>
    <alternativeName>
        <fullName evidence="1">4'-phosphopantetheinyl transferase AcpS</fullName>
    </alternativeName>
</protein>
<feature type="chain" id="PRO_1000057664" description="Holo-[acyl-carrier-protein] synthase">
    <location>
        <begin position="1"/>
        <end position="122"/>
    </location>
</feature>
<feature type="binding site" evidence="1">
    <location>
        <position position="8"/>
    </location>
    <ligand>
        <name>Mg(2+)</name>
        <dbReference type="ChEBI" id="CHEBI:18420"/>
    </ligand>
</feature>
<feature type="binding site" evidence="1">
    <location>
        <position position="56"/>
    </location>
    <ligand>
        <name>Mg(2+)</name>
        <dbReference type="ChEBI" id="CHEBI:18420"/>
    </ligand>
</feature>
<organism>
    <name type="scientific">Alkaliphilus metalliredigens (strain QYMF)</name>
    <dbReference type="NCBI Taxonomy" id="293826"/>
    <lineage>
        <taxon>Bacteria</taxon>
        <taxon>Bacillati</taxon>
        <taxon>Bacillota</taxon>
        <taxon>Clostridia</taxon>
        <taxon>Peptostreptococcales</taxon>
        <taxon>Natronincolaceae</taxon>
        <taxon>Alkaliphilus</taxon>
    </lineage>
</organism>
<proteinExistence type="inferred from homology"/>
<comment type="function">
    <text evidence="1">Transfers the 4'-phosphopantetheine moiety from coenzyme A to a Ser of acyl-carrier-protein.</text>
</comment>
<comment type="catalytic activity">
    <reaction evidence="1">
        <text>apo-[ACP] + CoA = holo-[ACP] + adenosine 3',5'-bisphosphate + H(+)</text>
        <dbReference type="Rhea" id="RHEA:12068"/>
        <dbReference type="Rhea" id="RHEA-COMP:9685"/>
        <dbReference type="Rhea" id="RHEA-COMP:9690"/>
        <dbReference type="ChEBI" id="CHEBI:15378"/>
        <dbReference type="ChEBI" id="CHEBI:29999"/>
        <dbReference type="ChEBI" id="CHEBI:57287"/>
        <dbReference type="ChEBI" id="CHEBI:58343"/>
        <dbReference type="ChEBI" id="CHEBI:64479"/>
        <dbReference type="EC" id="2.7.8.7"/>
    </reaction>
</comment>
<comment type="cofactor">
    <cofactor evidence="1">
        <name>Mg(2+)</name>
        <dbReference type="ChEBI" id="CHEBI:18420"/>
    </cofactor>
</comment>
<comment type="subcellular location">
    <subcellularLocation>
        <location evidence="1">Cytoplasm</location>
    </subcellularLocation>
</comment>
<comment type="similarity">
    <text evidence="1">Belongs to the P-Pant transferase superfamily. AcpS family.</text>
</comment>
<accession>A6TVL0</accession>